<organism>
    <name type="scientific">Arabidopsis thaliana</name>
    <name type="common">Mouse-ear cress</name>
    <dbReference type="NCBI Taxonomy" id="3702"/>
    <lineage>
        <taxon>Eukaryota</taxon>
        <taxon>Viridiplantae</taxon>
        <taxon>Streptophyta</taxon>
        <taxon>Embryophyta</taxon>
        <taxon>Tracheophyta</taxon>
        <taxon>Spermatophyta</taxon>
        <taxon>Magnoliopsida</taxon>
        <taxon>eudicotyledons</taxon>
        <taxon>Gunneridae</taxon>
        <taxon>Pentapetalae</taxon>
        <taxon>rosids</taxon>
        <taxon>malvids</taxon>
        <taxon>Brassicales</taxon>
        <taxon>Brassicaceae</taxon>
        <taxon>Camelineae</taxon>
        <taxon>Arabidopsis</taxon>
    </lineage>
</organism>
<sequence>MAEEHKHEESIMEKISEKIHGHDDSSSSSSDSDDDKNSASLKTKIYRLFGREQPLHKLFGGGKPADIFLWRNKKVSGGVLGAATVSWILFELLEYNLLTLFGHISILALAVLFLWSSASTFIHKSPLHIPEVHIPEDVVLQLASGLRIEINRGFTVLRDIASGRDLKKFLLVIAGLWVLSKVGSSCNFLTLIYIATVLLFTIPVLYEKYEDKVDDFGEKAMREIKKQYVEFDVKVLSKVMSKIPKGAFAFIKKKD</sequence>
<keyword id="KW-0007">Acetylation</keyword>
<keyword id="KW-0025">Alternative splicing</keyword>
<keyword id="KW-0256">Endoplasmic reticulum</keyword>
<keyword id="KW-0472">Membrane</keyword>
<keyword id="KW-1185">Reference proteome</keyword>
<keyword id="KW-0812">Transmembrane</keyword>
<keyword id="KW-1133">Transmembrane helix</keyword>
<keyword id="KW-0926">Vacuole</keyword>
<feature type="initiator methionine" description="Removed" evidence="1">
    <location>
        <position position="1"/>
    </location>
</feature>
<feature type="chain" id="PRO_0000371284" description="Reticulon-like protein B3">
    <location>
        <begin position="2"/>
        <end position="255"/>
    </location>
</feature>
<feature type="transmembrane region" description="Helical" evidence="2">
    <location>
        <begin position="75"/>
        <end position="95"/>
    </location>
</feature>
<feature type="transmembrane region" description="Helical" evidence="2">
    <location>
        <begin position="97"/>
        <end position="117"/>
    </location>
</feature>
<feature type="transmembrane region" description="Helical" evidence="2">
    <location>
        <begin position="186"/>
        <end position="206"/>
    </location>
</feature>
<feature type="domain" description="Reticulon" evidence="3">
    <location>
        <begin position="64"/>
        <end position="255"/>
    </location>
</feature>
<feature type="region of interest" description="Disordered" evidence="4">
    <location>
        <begin position="1"/>
        <end position="38"/>
    </location>
</feature>
<feature type="compositionally biased region" description="Basic and acidic residues" evidence="4">
    <location>
        <begin position="1"/>
        <end position="25"/>
    </location>
</feature>
<feature type="modified residue" description="N-acetylalanine" evidence="1">
    <location>
        <position position="2"/>
    </location>
</feature>
<protein>
    <recommendedName>
        <fullName>Reticulon-like protein B3</fullName>
        <shortName>AtRTNLB3</shortName>
    </recommendedName>
</protein>
<proteinExistence type="evidence at transcript level"/>
<dbReference type="EMBL" id="AC007764">
    <property type="protein sequence ID" value="AAF24576.1"/>
    <property type="molecule type" value="Genomic_DNA"/>
</dbReference>
<dbReference type="EMBL" id="CP002684">
    <property type="protein sequence ID" value="AEE34190.1"/>
    <property type="molecule type" value="Genomic_DNA"/>
</dbReference>
<dbReference type="EMBL" id="AY064065">
    <property type="protein sequence ID" value="AAL36421.1"/>
    <property type="molecule type" value="mRNA"/>
</dbReference>
<dbReference type="EMBL" id="AY117343">
    <property type="protein sequence ID" value="AAM51418.1"/>
    <property type="molecule type" value="mRNA"/>
</dbReference>
<dbReference type="EMBL" id="AK226984">
    <property type="protein sequence ID" value="BAE99051.1"/>
    <property type="molecule type" value="mRNA"/>
</dbReference>
<dbReference type="RefSeq" id="NP_176592.1">
    <molecule id="Q9SH59-1"/>
    <property type="nucleotide sequence ID" value="NM_105082.5"/>
</dbReference>
<dbReference type="BioGRID" id="27934">
    <property type="interactions" value="5"/>
</dbReference>
<dbReference type="FunCoup" id="Q9SH59">
    <property type="interactions" value="1647"/>
</dbReference>
<dbReference type="IntAct" id="Q9SH59">
    <property type="interactions" value="5"/>
</dbReference>
<dbReference type="STRING" id="3702.Q9SH59"/>
<dbReference type="iPTMnet" id="Q9SH59"/>
<dbReference type="PaxDb" id="3702-AT1G64090.2"/>
<dbReference type="ProteomicsDB" id="226677">
    <molecule id="Q9SH59-1"/>
</dbReference>
<dbReference type="EnsemblPlants" id="AT1G64090.1">
    <molecule id="Q9SH59-1"/>
    <property type="protein sequence ID" value="AT1G64090.1"/>
    <property type="gene ID" value="AT1G64090"/>
</dbReference>
<dbReference type="GeneID" id="842713"/>
<dbReference type="Gramene" id="AT1G64090.1">
    <molecule id="Q9SH59-1"/>
    <property type="protein sequence ID" value="AT1G64090.1"/>
    <property type="gene ID" value="AT1G64090"/>
</dbReference>
<dbReference type="KEGG" id="ath:AT1G64090"/>
<dbReference type="Araport" id="AT1G64090"/>
<dbReference type="TAIR" id="AT1G64090">
    <property type="gene designation" value="RTNLB3"/>
</dbReference>
<dbReference type="eggNOG" id="KOG1792">
    <property type="taxonomic scope" value="Eukaryota"/>
</dbReference>
<dbReference type="HOGENOM" id="CLU_066344_1_0_1"/>
<dbReference type="InParanoid" id="Q9SH59"/>
<dbReference type="OMA" id="LHFSNHS"/>
<dbReference type="PhylomeDB" id="Q9SH59"/>
<dbReference type="CD-CODE" id="4299E36E">
    <property type="entry name" value="Nucleolus"/>
</dbReference>
<dbReference type="PRO" id="PR:Q9SH59"/>
<dbReference type="Proteomes" id="UP000006548">
    <property type="component" value="Chromosome 1"/>
</dbReference>
<dbReference type="ExpressionAtlas" id="Q9SH59">
    <property type="expression patterns" value="baseline and differential"/>
</dbReference>
<dbReference type="GO" id="GO:0098554">
    <property type="term" value="C:cytoplasmic side of endoplasmic reticulum membrane"/>
    <property type="evidence" value="ECO:0000314"/>
    <property type="project" value="UniProtKB"/>
</dbReference>
<dbReference type="GO" id="GO:0071782">
    <property type="term" value="C:endoplasmic reticulum tubular network"/>
    <property type="evidence" value="ECO:0000314"/>
    <property type="project" value="UniProtKB"/>
</dbReference>
<dbReference type="GO" id="GO:0005774">
    <property type="term" value="C:vacuolar membrane"/>
    <property type="evidence" value="ECO:0007669"/>
    <property type="project" value="UniProtKB-SubCell"/>
</dbReference>
<dbReference type="GO" id="GO:0071786">
    <property type="term" value="P:endoplasmic reticulum tubular network organization"/>
    <property type="evidence" value="ECO:0000315"/>
    <property type="project" value="UniProtKB"/>
</dbReference>
<dbReference type="GO" id="GO:0009617">
    <property type="term" value="P:response to bacterium"/>
    <property type="evidence" value="ECO:0007669"/>
    <property type="project" value="InterPro"/>
</dbReference>
<dbReference type="InterPro" id="IPR003388">
    <property type="entry name" value="Reticulon"/>
</dbReference>
<dbReference type="InterPro" id="IPR045064">
    <property type="entry name" value="Reticulon-like"/>
</dbReference>
<dbReference type="PANTHER" id="PTHR10994">
    <property type="entry name" value="RETICULON"/>
    <property type="match status" value="1"/>
</dbReference>
<dbReference type="PANTHER" id="PTHR10994:SF193">
    <property type="entry name" value="RETICULON-LIKE PROTEIN"/>
    <property type="match status" value="1"/>
</dbReference>
<dbReference type="Pfam" id="PF02453">
    <property type="entry name" value="Reticulon"/>
    <property type="match status" value="1"/>
</dbReference>
<dbReference type="PROSITE" id="PS50845">
    <property type="entry name" value="RETICULON"/>
    <property type="match status" value="1"/>
</dbReference>
<evidence type="ECO:0000250" key="1">
    <source>
        <dbReference type="UniProtKB" id="O82352"/>
    </source>
</evidence>
<evidence type="ECO:0000255" key="2"/>
<evidence type="ECO:0000255" key="3">
    <source>
        <dbReference type="PROSITE-ProRule" id="PRU00170"/>
    </source>
</evidence>
<evidence type="ECO:0000256" key="4">
    <source>
        <dbReference type="SAM" id="MobiDB-lite"/>
    </source>
</evidence>
<evidence type="ECO:0000269" key="5">
    <source>
    </source>
</evidence>
<evidence type="ECO:0000305" key="6"/>
<reference key="1">
    <citation type="journal article" date="2000" name="Nature">
        <title>Sequence and analysis of chromosome 1 of the plant Arabidopsis thaliana.</title>
        <authorList>
            <person name="Theologis A."/>
            <person name="Ecker J.R."/>
            <person name="Palm C.J."/>
            <person name="Federspiel N.A."/>
            <person name="Kaul S."/>
            <person name="White O."/>
            <person name="Alonso J."/>
            <person name="Altafi H."/>
            <person name="Araujo R."/>
            <person name="Bowman C.L."/>
            <person name="Brooks S.Y."/>
            <person name="Buehler E."/>
            <person name="Chan A."/>
            <person name="Chao Q."/>
            <person name="Chen H."/>
            <person name="Cheuk R.F."/>
            <person name="Chin C.W."/>
            <person name="Chung M.K."/>
            <person name="Conn L."/>
            <person name="Conway A.B."/>
            <person name="Conway A.R."/>
            <person name="Creasy T.H."/>
            <person name="Dewar K."/>
            <person name="Dunn P."/>
            <person name="Etgu P."/>
            <person name="Feldblyum T.V."/>
            <person name="Feng J.-D."/>
            <person name="Fong B."/>
            <person name="Fujii C.Y."/>
            <person name="Gill J.E."/>
            <person name="Goldsmith A.D."/>
            <person name="Haas B."/>
            <person name="Hansen N.F."/>
            <person name="Hughes B."/>
            <person name="Huizar L."/>
            <person name="Hunter J.L."/>
            <person name="Jenkins J."/>
            <person name="Johnson-Hopson C."/>
            <person name="Khan S."/>
            <person name="Khaykin E."/>
            <person name="Kim C.J."/>
            <person name="Koo H.L."/>
            <person name="Kremenetskaia I."/>
            <person name="Kurtz D.B."/>
            <person name="Kwan A."/>
            <person name="Lam B."/>
            <person name="Langin-Hooper S."/>
            <person name="Lee A."/>
            <person name="Lee J.M."/>
            <person name="Lenz C.A."/>
            <person name="Li J.H."/>
            <person name="Li Y.-P."/>
            <person name="Lin X."/>
            <person name="Liu S.X."/>
            <person name="Liu Z.A."/>
            <person name="Luros J.S."/>
            <person name="Maiti R."/>
            <person name="Marziali A."/>
            <person name="Militscher J."/>
            <person name="Miranda M."/>
            <person name="Nguyen M."/>
            <person name="Nierman W.C."/>
            <person name="Osborne B.I."/>
            <person name="Pai G."/>
            <person name="Peterson J."/>
            <person name="Pham P.K."/>
            <person name="Rizzo M."/>
            <person name="Rooney T."/>
            <person name="Rowley D."/>
            <person name="Sakano H."/>
            <person name="Salzberg S.L."/>
            <person name="Schwartz J.R."/>
            <person name="Shinn P."/>
            <person name="Southwick A.M."/>
            <person name="Sun H."/>
            <person name="Tallon L.J."/>
            <person name="Tambunga G."/>
            <person name="Toriumi M.J."/>
            <person name="Town C.D."/>
            <person name="Utterback T."/>
            <person name="Van Aken S."/>
            <person name="Vaysberg M."/>
            <person name="Vysotskaia V.S."/>
            <person name="Walker M."/>
            <person name="Wu D."/>
            <person name="Yu G."/>
            <person name="Fraser C.M."/>
            <person name="Venter J.C."/>
            <person name="Davis R.W."/>
        </authorList>
    </citation>
    <scope>NUCLEOTIDE SEQUENCE [LARGE SCALE GENOMIC DNA]</scope>
    <source>
        <strain>cv. Columbia</strain>
    </source>
</reference>
<reference key="2">
    <citation type="journal article" date="2017" name="Plant J.">
        <title>Araport11: a complete reannotation of the Arabidopsis thaliana reference genome.</title>
        <authorList>
            <person name="Cheng C.Y."/>
            <person name="Krishnakumar V."/>
            <person name="Chan A.P."/>
            <person name="Thibaud-Nissen F."/>
            <person name="Schobel S."/>
            <person name="Town C.D."/>
        </authorList>
    </citation>
    <scope>GENOME REANNOTATION</scope>
    <source>
        <strain>cv. Columbia</strain>
    </source>
</reference>
<reference key="3">
    <citation type="journal article" date="2003" name="Science">
        <title>Empirical analysis of transcriptional activity in the Arabidopsis genome.</title>
        <authorList>
            <person name="Yamada K."/>
            <person name="Lim J."/>
            <person name="Dale J.M."/>
            <person name="Chen H."/>
            <person name="Shinn P."/>
            <person name="Palm C.J."/>
            <person name="Southwick A.M."/>
            <person name="Wu H.C."/>
            <person name="Kim C.J."/>
            <person name="Nguyen M."/>
            <person name="Pham P.K."/>
            <person name="Cheuk R.F."/>
            <person name="Karlin-Newmann G."/>
            <person name="Liu S.X."/>
            <person name="Lam B."/>
            <person name="Sakano H."/>
            <person name="Wu T."/>
            <person name="Yu G."/>
            <person name="Miranda M."/>
            <person name="Quach H.L."/>
            <person name="Tripp M."/>
            <person name="Chang C.H."/>
            <person name="Lee J.M."/>
            <person name="Toriumi M.J."/>
            <person name="Chan M.M."/>
            <person name="Tang C.C."/>
            <person name="Onodera C.S."/>
            <person name="Deng J.M."/>
            <person name="Akiyama K."/>
            <person name="Ansari Y."/>
            <person name="Arakawa T."/>
            <person name="Banh J."/>
            <person name="Banno F."/>
            <person name="Bowser L."/>
            <person name="Brooks S.Y."/>
            <person name="Carninci P."/>
            <person name="Chao Q."/>
            <person name="Choy N."/>
            <person name="Enju A."/>
            <person name="Goldsmith A.D."/>
            <person name="Gurjal M."/>
            <person name="Hansen N.F."/>
            <person name="Hayashizaki Y."/>
            <person name="Johnson-Hopson C."/>
            <person name="Hsuan V.W."/>
            <person name="Iida K."/>
            <person name="Karnes M."/>
            <person name="Khan S."/>
            <person name="Koesema E."/>
            <person name="Ishida J."/>
            <person name="Jiang P.X."/>
            <person name="Jones T."/>
            <person name="Kawai J."/>
            <person name="Kamiya A."/>
            <person name="Meyers C."/>
            <person name="Nakajima M."/>
            <person name="Narusaka M."/>
            <person name="Seki M."/>
            <person name="Sakurai T."/>
            <person name="Satou M."/>
            <person name="Tamse R."/>
            <person name="Vaysberg M."/>
            <person name="Wallender E.K."/>
            <person name="Wong C."/>
            <person name="Yamamura Y."/>
            <person name="Yuan S."/>
            <person name="Shinozaki K."/>
            <person name="Davis R.W."/>
            <person name="Theologis A."/>
            <person name="Ecker J.R."/>
        </authorList>
    </citation>
    <scope>NUCLEOTIDE SEQUENCE [LARGE SCALE MRNA]</scope>
    <source>
        <strain>cv. Columbia</strain>
    </source>
</reference>
<reference key="4">
    <citation type="submission" date="2006-07" db="EMBL/GenBank/DDBJ databases">
        <title>Large-scale analysis of RIKEN Arabidopsis full-length (RAFL) cDNAs.</title>
        <authorList>
            <person name="Totoki Y."/>
            <person name="Seki M."/>
            <person name="Ishida J."/>
            <person name="Nakajima M."/>
            <person name="Enju A."/>
            <person name="Kamiya A."/>
            <person name="Narusaka M."/>
            <person name="Shin-i T."/>
            <person name="Nakagawa M."/>
            <person name="Sakamoto N."/>
            <person name="Oishi K."/>
            <person name="Kohara Y."/>
            <person name="Kobayashi M."/>
            <person name="Toyoda A."/>
            <person name="Sakaki Y."/>
            <person name="Sakurai T."/>
            <person name="Iida K."/>
            <person name="Akiyama K."/>
            <person name="Satou M."/>
            <person name="Toyoda T."/>
            <person name="Konagaya A."/>
            <person name="Carninci P."/>
            <person name="Kawai J."/>
            <person name="Hayashizaki Y."/>
            <person name="Shinozaki K."/>
        </authorList>
    </citation>
    <scope>NUCLEOTIDE SEQUENCE [LARGE SCALE MRNA]</scope>
    <source>
        <strain>cv. Columbia</strain>
    </source>
</reference>
<reference key="5">
    <citation type="journal article" date="2007" name="FEBS Lett.">
        <title>Reticulon-like proteins in Arabidopsis thaliana: structural organization and ER localization.</title>
        <authorList>
            <person name="Nziengui H."/>
            <person name="Bouhidel K."/>
            <person name="Pillon D."/>
            <person name="Der C."/>
            <person name="Marty F."/>
            <person name="Schoefs B."/>
        </authorList>
    </citation>
    <scope>GENE FAMILY</scope>
    <scope>NOMENCLATURE</scope>
</reference>
<reference key="6">
    <citation type="journal article" date="2007" name="Plant Physiol.">
        <title>Novel tonoplast transporters identified using a proteomic approach with vacuoles isolated from cauliflower buds.</title>
        <authorList>
            <person name="Schmidt U.G."/>
            <person name="Endler A."/>
            <person name="Schelbert S."/>
            <person name="Brunner A."/>
            <person name="Schnell M."/>
            <person name="Neuhaus H.E."/>
            <person name="Marty-Mazars D."/>
            <person name="Marty F."/>
            <person name="Baginsky S."/>
            <person name="Martinoia E."/>
        </authorList>
    </citation>
    <scope>SUBCELLULAR LOCATION</scope>
</reference>
<gene>
    <name type="primary">RTNLB3</name>
    <name type="ordered locus">At1g64090</name>
    <name type="ORF">F22C12.15</name>
</gene>
<comment type="subcellular location">
    <subcellularLocation>
        <location evidence="6">Endoplasmic reticulum membrane</location>
        <topology evidence="2">Multi-pass membrane protein</topology>
    </subcellularLocation>
    <subcellularLocation>
        <location evidence="5">Vacuole membrane</location>
        <topology evidence="2">Multi-pass membrane protein</topology>
    </subcellularLocation>
</comment>
<comment type="alternative products">
    <event type="alternative splicing"/>
    <isoform>
        <id>Q9SH59-1</id>
        <name>1</name>
        <sequence type="displayed"/>
    </isoform>
    <text>A number of isoforms are produced. According to EST sequences.</text>
</comment>
<name>RTNLC_ARATH</name>
<accession>Q9SH59</accession>